<feature type="chain" id="PRO_0000214100" description="Non-structural maintenance of chromosome element 4">
    <location>
        <begin position="1"/>
        <end position="402"/>
    </location>
</feature>
<feature type="region of interest" description="Disordered" evidence="1">
    <location>
        <begin position="1"/>
        <end position="45"/>
    </location>
</feature>
<feature type="region of interest" description="Disordered" evidence="1">
    <location>
        <begin position="166"/>
        <end position="195"/>
    </location>
</feature>
<feature type="compositionally biased region" description="Basic and acidic residues" evidence="1">
    <location>
        <begin position="22"/>
        <end position="43"/>
    </location>
</feature>
<feature type="compositionally biased region" description="Basic and acidic residues" evidence="1">
    <location>
        <begin position="179"/>
        <end position="191"/>
    </location>
</feature>
<feature type="helix" evidence="7">
    <location>
        <begin position="222"/>
        <end position="226"/>
    </location>
</feature>
<feature type="turn" evidence="7">
    <location>
        <begin position="227"/>
        <end position="230"/>
    </location>
</feature>
<feature type="helix" evidence="7">
    <location>
        <begin position="242"/>
        <end position="244"/>
    </location>
</feature>
<feature type="helix" evidence="7">
    <location>
        <begin position="309"/>
        <end position="312"/>
    </location>
</feature>
<feature type="helix" evidence="7">
    <location>
        <begin position="320"/>
        <end position="332"/>
    </location>
</feature>
<feature type="turn" evidence="7">
    <location>
        <begin position="333"/>
        <end position="335"/>
    </location>
</feature>
<feature type="strand" evidence="7">
    <location>
        <begin position="345"/>
        <end position="350"/>
    </location>
</feature>
<feature type="helix" evidence="7">
    <location>
        <begin position="360"/>
        <end position="372"/>
    </location>
</feature>
<feature type="helix" evidence="7">
    <location>
        <begin position="384"/>
        <end position="394"/>
    </location>
</feature>
<comment type="function">
    <text evidence="5">Acts in a DNA repair pathway for removal of UV-induced DNA damage that is distinct from classical nucleotide excision repair and in repair of ionizing radiation damage. Functions in homologous recombination repair of DNA double strand breaks and in recovery of stalled replication forks.</text>
</comment>
<comment type="subunit">
    <text evidence="3 4 5">Component of the Smc5-Smc6 complex which consists of KRE29, MMS21, NSE1, NSE3, NSE4, NSE5, SMC5 and SMC6. Interacts with NSE3.</text>
</comment>
<comment type="interaction">
    <interactant intactId="EBI-14410">
        <id>P43124</id>
    </interactant>
    <interactant intactId="EBI-36625">
        <id>Q05541</id>
        <label>NSE3</label>
    </interactant>
    <organismsDiffer>false</organismsDiffer>
    <experiments>5</experiments>
</comment>
<comment type="interaction">
    <interactant intactId="EBI-14410">
        <id>P43124</id>
    </interactant>
    <interactant intactId="EBI-34125">
        <id>Q08204</id>
        <label>SMC5</label>
    </interactant>
    <organismsDiffer>false</organismsDiffer>
    <experiments>4</experiments>
</comment>
<comment type="interaction">
    <interactant intactId="EBI-14410">
        <id>P43124</id>
    </interactant>
    <interactant intactId="EBI-17490">
        <id>Q12306</id>
        <label>SMT3</label>
    </interactant>
    <organismsDiffer>false</organismsDiffer>
    <experiments>2</experiments>
</comment>
<comment type="subcellular location">
    <subcellularLocation>
        <location evidence="2 5">Nucleus</location>
    </subcellularLocation>
</comment>
<comment type="similarity">
    <text evidence="6">Belongs to the NSE4 family.</text>
</comment>
<gene>
    <name type="primary">NSE4</name>
    <name type="synonym">QRI2</name>
    <name type="ordered locus">YDL105W</name>
    <name type="ORF">D2354</name>
</gene>
<name>NSE4_YEAST</name>
<proteinExistence type="evidence at protein level"/>
<organism>
    <name type="scientific">Saccharomyces cerevisiae (strain ATCC 204508 / S288c)</name>
    <name type="common">Baker's yeast</name>
    <dbReference type="NCBI Taxonomy" id="559292"/>
    <lineage>
        <taxon>Eukaryota</taxon>
        <taxon>Fungi</taxon>
        <taxon>Dikarya</taxon>
        <taxon>Ascomycota</taxon>
        <taxon>Saccharomycotina</taxon>
        <taxon>Saccharomycetes</taxon>
        <taxon>Saccharomycetales</taxon>
        <taxon>Saccharomycetaceae</taxon>
        <taxon>Saccharomyces</taxon>
    </lineage>
</organism>
<evidence type="ECO:0000256" key="1">
    <source>
        <dbReference type="SAM" id="MobiDB-lite"/>
    </source>
</evidence>
<evidence type="ECO:0000269" key="2">
    <source>
    </source>
</evidence>
<evidence type="ECO:0000269" key="3">
    <source>
    </source>
</evidence>
<evidence type="ECO:0000269" key="4">
    <source>
    </source>
</evidence>
<evidence type="ECO:0000269" key="5">
    <source>
    </source>
</evidence>
<evidence type="ECO:0000305" key="6"/>
<evidence type="ECO:0007829" key="7">
    <source>
        <dbReference type="PDB" id="8HQS"/>
    </source>
</evidence>
<dbReference type="EMBL" id="X79380">
    <property type="protein sequence ID" value="CAA55925.1"/>
    <property type="molecule type" value="Genomic_DNA"/>
</dbReference>
<dbReference type="EMBL" id="X95644">
    <property type="protein sequence ID" value="CAA64908.1"/>
    <property type="molecule type" value="Genomic_DNA"/>
</dbReference>
<dbReference type="EMBL" id="Z74153">
    <property type="protein sequence ID" value="CAA98672.1"/>
    <property type="molecule type" value="Genomic_DNA"/>
</dbReference>
<dbReference type="EMBL" id="BK006938">
    <property type="protein sequence ID" value="DAA11755.1"/>
    <property type="molecule type" value="Genomic_DNA"/>
</dbReference>
<dbReference type="PIR" id="S50739">
    <property type="entry name" value="S50739"/>
</dbReference>
<dbReference type="RefSeq" id="NP_010178.1">
    <property type="nucleotide sequence ID" value="NM_001180164.1"/>
</dbReference>
<dbReference type="PDB" id="7QCD">
    <property type="method" value="EM"/>
    <property type="resolution" value="8.00 A"/>
    <property type="chains" value="F=1-402"/>
</dbReference>
<dbReference type="PDB" id="7TVE">
    <property type="method" value="EM"/>
    <property type="resolution" value="3.80 A"/>
    <property type="chains" value="G=1-402"/>
</dbReference>
<dbReference type="PDB" id="7YMD">
    <property type="method" value="EM"/>
    <property type="resolution" value="4.18 A"/>
    <property type="chains" value="A=1-402"/>
</dbReference>
<dbReference type="PDB" id="7YQH">
    <property type="method" value="EM"/>
    <property type="resolution" value="5.60 A"/>
    <property type="chains" value="H=1-402"/>
</dbReference>
<dbReference type="PDB" id="8HQS">
    <property type="method" value="EM"/>
    <property type="resolution" value="3.20 A"/>
    <property type="chains" value="H=1-402"/>
</dbReference>
<dbReference type="PDB" id="8T8F">
    <property type="method" value="EM"/>
    <property type="resolution" value="4.80 A"/>
    <property type="chains" value="G=1-402"/>
</dbReference>
<dbReference type="PDBsum" id="7QCD"/>
<dbReference type="PDBsum" id="7TVE"/>
<dbReference type="PDBsum" id="7YMD"/>
<dbReference type="PDBsum" id="7YQH"/>
<dbReference type="PDBsum" id="8HQS"/>
<dbReference type="PDBsum" id="8T8F"/>
<dbReference type="EMDB" id="EMD-13895"/>
<dbReference type="EMDB" id="EMD-26140"/>
<dbReference type="EMDB" id="EMD-33927"/>
<dbReference type="EMDB" id="EMD-34953"/>
<dbReference type="EMDB" id="EMD-41098"/>
<dbReference type="SMR" id="P43124"/>
<dbReference type="BioGRID" id="31957">
    <property type="interactions" value="812"/>
</dbReference>
<dbReference type="ComplexPortal" id="CPX-1364">
    <property type="entry name" value="SMC5-SMC6 SUMO ligase complex"/>
</dbReference>
<dbReference type="DIP" id="DIP-2839N"/>
<dbReference type="FunCoup" id="P43124">
    <property type="interactions" value="36"/>
</dbReference>
<dbReference type="IntAct" id="P43124">
    <property type="interactions" value="15"/>
</dbReference>
<dbReference type="MINT" id="P43124"/>
<dbReference type="STRING" id="4932.YDL105W"/>
<dbReference type="iPTMnet" id="P43124"/>
<dbReference type="PaxDb" id="4932-YDL105W"/>
<dbReference type="PeptideAtlas" id="P43124"/>
<dbReference type="EnsemblFungi" id="YDL105W_mRNA">
    <property type="protein sequence ID" value="YDL105W"/>
    <property type="gene ID" value="YDL105W"/>
</dbReference>
<dbReference type="GeneID" id="851453"/>
<dbReference type="KEGG" id="sce:YDL105W"/>
<dbReference type="AGR" id="SGD:S000002263"/>
<dbReference type="SGD" id="S000002263">
    <property type="gene designation" value="NSE4"/>
</dbReference>
<dbReference type="VEuPathDB" id="FungiDB:YDL105W"/>
<dbReference type="eggNOG" id="KOG2866">
    <property type="taxonomic scope" value="Eukaryota"/>
</dbReference>
<dbReference type="GeneTree" id="ENSGT00940000165188"/>
<dbReference type="HOGENOM" id="CLU_041037_5_1_1"/>
<dbReference type="InParanoid" id="P43124"/>
<dbReference type="OMA" id="IFQMDMP"/>
<dbReference type="OrthoDB" id="361242at2759"/>
<dbReference type="BioCyc" id="YEAST:G3O-29506-MONOMER"/>
<dbReference type="Reactome" id="R-SCE-3108214">
    <property type="pathway name" value="SUMOylation of DNA damage response and repair proteins"/>
</dbReference>
<dbReference type="BioGRID-ORCS" id="851453">
    <property type="hits" value="5 hits in 10 CRISPR screens"/>
</dbReference>
<dbReference type="PRO" id="PR:P43124"/>
<dbReference type="Proteomes" id="UP000002311">
    <property type="component" value="Chromosome IV"/>
</dbReference>
<dbReference type="RNAct" id="P43124">
    <property type="molecule type" value="protein"/>
</dbReference>
<dbReference type="GO" id="GO:0000781">
    <property type="term" value="C:chromosome, telomeric region"/>
    <property type="evidence" value="ECO:0000303"/>
    <property type="project" value="ComplexPortal"/>
</dbReference>
<dbReference type="GO" id="GO:0005634">
    <property type="term" value="C:nucleus"/>
    <property type="evidence" value="ECO:0007005"/>
    <property type="project" value="SGD"/>
</dbReference>
<dbReference type="GO" id="GO:0030915">
    <property type="term" value="C:Smc5-Smc6 complex"/>
    <property type="evidence" value="ECO:0000314"/>
    <property type="project" value="SGD"/>
</dbReference>
<dbReference type="GO" id="GO:0140588">
    <property type="term" value="P:chromatin looping"/>
    <property type="evidence" value="ECO:0000303"/>
    <property type="project" value="ComplexPortal"/>
</dbReference>
<dbReference type="GO" id="GO:0006281">
    <property type="term" value="P:DNA repair"/>
    <property type="evidence" value="ECO:0000315"/>
    <property type="project" value="SGD"/>
</dbReference>
<dbReference type="GO" id="GO:0000724">
    <property type="term" value="P:double-strand break repair via homologous recombination"/>
    <property type="evidence" value="ECO:0000303"/>
    <property type="project" value="ComplexPortal"/>
</dbReference>
<dbReference type="GO" id="GO:0032204">
    <property type="term" value="P:regulation of telomere maintenance"/>
    <property type="evidence" value="ECO:0000303"/>
    <property type="project" value="ComplexPortal"/>
</dbReference>
<dbReference type="InterPro" id="IPR027786">
    <property type="entry name" value="Nse4/EID"/>
</dbReference>
<dbReference type="InterPro" id="IPR014854">
    <property type="entry name" value="Nse4_C"/>
</dbReference>
<dbReference type="InterPro" id="IPR029225">
    <property type="entry name" value="Nse4_Nse3-bd"/>
</dbReference>
<dbReference type="PANTHER" id="PTHR16140">
    <property type="entry name" value="NON-STRUCTURAL MAINTENANCE OF CHROMOSOMES ELEMENT 4"/>
    <property type="match status" value="1"/>
</dbReference>
<dbReference type="PANTHER" id="PTHR16140:SF0">
    <property type="entry name" value="NON-STRUCTURAL MAINTENANCE OF CHROMOSOMES ELEMENT 4"/>
    <property type="match status" value="1"/>
</dbReference>
<dbReference type="Pfam" id="PF15412">
    <property type="entry name" value="Nse4-Nse3_bdg"/>
    <property type="match status" value="1"/>
</dbReference>
<dbReference type="Pfam" id="PF08743">
    <property type="entry name" value="Nse4_C"/>
    <property type="match status" value="1"/>
</dbReference>
<reference key="1">
    <citation type="journal article" date="1994" name="Yeast">
        <title>Sequence of the PHO2-POL3 (CDC2) region of chromosome IV of Saccharomyces cerevisiae.</title>
        <authorList>
            <person name="Simon M."/>
            <person name="Benit P."/>
            <person name="Vassal A."/>
            <person name="Dubois C."/>
            <person name="Faye G."/>
        </authorList>
    </citation>
    <scope>NUCLEOTIDE SEQUENCE [GENOMIC DNA]</scope>
</reference>
<reference key="2">
    <citation type="journal article" date="1996" name="Yeast">
        <title>The sequence of a 20.3 kb DNA fragment from the left arm of Saccharomyces cerevisiae chromosome IV contains the KIN28, MSS2, PHO2, POL3 and DUN1 genes, and six new open reading frames.</title>
        <authorList>
            <person name="Saiz J.E."/>
            <person name="Buitrago M.J."/>
            <person name="Garcia R."/>
            <person name="Revuelta J.L."/>
            <person name="del Rey F."/>
        </authorList>
    </citation>
    <scope>NUCLEOTIDE SEQUENCE [GENOMIC DNA]</scope>
    <source>
        <strain>ATCC 96604 / S288c / FY1679</strain>
    </source>
</reference>
<reference key="3">
    <citation type="journal article" date="1997" name="Nature">
        <title>The nucleotide sequence of Saccharomyces cerevisiae chromosome IV.</title>
        <authorList>
            <person name="Jacq C."/>
            <person name="Alt-Moerbe J."/>
            <person name="Andre B."/>
            <person name="Arnold W."/>
            <person name="Bahr A."/>
            <person name="Ballesta J.P.G."/>
            <person name="Bargues M."/>
            <person name="Baron L."/>
            <person name="Becker A."/>
            <person name="Biteau N."/>
            <person name="Bloecker H."/>
            <person name="Blugeon C."/>
            <person name="Boskovic J."/>
            <person name="Brandt P."/>
            <person name="Brueckner M."/>
            <person name="Buitrago M.J."/>
            <person name="Coster F."/>
            <person name="Delaveau T."/>
            <person name="del Rey F."/>
            <person name="Dujon B."/>
            <person name="Eide L.G."/>
            <person name="Garcia-Cantalejo J.M."/>
            <person name="Goffeau A."/>
            <person name="Gomez-Peris A."/>
            <person name="Granotier C."/>
            <person name="Hanemann V."/>
            <person name="Hankeln T."/>
            <person name="Hoheisel J.D."/>
            <person name="Jaeger W."/>
            <person name="Jimenez A."/>
            <person name="Jonniaux J.-L."/>
            <person name="Kraemer C."/>
            <person name="Kuester H."/>
            <person name="Laamanen P."/>
            <person name="Legros Y."/>
            <person name="Louis E.J."/>
            <person name="Moeller-Rieker S."/>
            <person name="Monnet A."/>
            <person name="Moro M."/>
            <person name="Mueller-Auer S."/>
            <person name="Nussbaumer B."/>
            <person name="Paricio N."/>
            <person name="Paulin L."/>
            <person name="Perea J."/>
            <person name="Perez-Alonso M."/>
            <person name="Perez-Ortin J.E."/>
            <person name="Pohl T.M."/>
            <person name="Prydz H."/>
            <person name="Purnelle B."/>
            <person name="Rasmussen S.W."/>
            <person name="Remacha M.A."/>
            <person name="Revuelta J.L."/>
            <person name="Rieger M."/>
            <person name="Salom D."/>
            <person name="Saluz H.P."/>
            <person name="Saiz J.E."/>
            <person name="Saren A.-M."/>
            <person name="Schaefer M."/>
            <person name="Scharfe M."/>
            <person name="Schmidt E.R."/>
            <person name="Schneider C."/>
            <person name="Scholler P."/>
            <person name="Schwarz S."/>
            <person name="Soler-Mira A."/>
            <person name="Urrestarazu L.A."/>
            <person name="Verhasselt P."/>
            <person name="Vissers S."/>
            <person name="Voet M."/>
            <person name="Volckaert G."/>
            <person name="Wagner G."/>
            <person name="Wambutt R."/>
            <person name="Wedler E."/>
            <person name="Wedler H."/>
            <person name="Woelfl S."/>
            <person name="Harris D.E."/>
            <person name="Bowman S."/>
            <person name="Brown D."/>
            <person name="Churcher C.M."/>
            <person name="Connor R."/>
            <person name="Dedman K."/>
            <person name="Gentles S."/>
            <person name="Hamlin N."/>
            <person name="Hunt S."/>
            <person name="Jones L."/>
            <person name="McDonald S."/>
            <person name="Murphy L.D."/>
            <person name="Niblett D."/>
            <person name="Odell C."/>
            <person name="Oliver K."/>
            <person name="Rajandream M.A."/>
            <person name="Richards C."/>
            <person name="Shore L."/>
            <person name="Walsh S.V."/>
            <person name="Barrell B.G."/>
            <person name="Dietrich F.S."/>
            <person name="Mulligan J.T."/>
            <person name="Allen E."/>
            <person name="Araujo R."/>
            <person name="Aviles E."/>
            <person name="Berno A."/>
            <person name="Carpenter J."/>
            <person name="Chen E."/>
            <person name="Cherry J.M."/>
            <person name="Chung E."/>
            <person name="Duncan M."/>
            <person name="Hunicke-Smith S."/>
            <person name="Hyman R.W."/>
            <person name="Komp C."/>
            <person name="Lashkari D."/>
            <person name="Lew H."/>
            <person name="Lin D."/>
            <person name="Mosedale D."/>
            <person name="Nakahara K."/>
            <person name="Namath A."/>
            <person name="Oefner P."/>
            <person name="Oh C."/>
            <person name="Petel F.X."/>
            <person name="Roberts D."/>
            <person name="Schramm S."/>
            <person name="Schroeder M."/>
            <person name="Shogren T."/>
            <person name="Shroff N."/>
            <person name="Winant A."/>
            <person name="Yelton M.A."/>
            <person name="Botstein D."/>
            <person name="Davis R.W."/>
            <person name="Johnston M."/>
            <person name="Andrews S."/>
            <person name="Brinkman R."/>
            <person name="Cooper J."/>
            <person name="Ding H."/>
            <person name="Du Z."/>
            <person name="Favello A."/>
            <person name="Fulton L."/>
            <person name="Gattung S."/>
            <person name="Greco T."/>
            <person name="Hallsworth K."/>
            <person name="Hawkins J."/>
            <person name="Hillier L.W."/>
            <person name="Jier M."/>
            <person name="Johnson D."/>
            <person name="Johnston L."/>
            <person name="Kirsten J."/>
            <person name="Kucaba T."/>
            <person name="Langston Y."/>
            <person name="Latreille P."/>
            <person name="Le T."/>
            <person name="Mardis E."/>
            <person name="Menezes S."/>
            <person name="Miller N."/>
            <person name="Nhan M."/>
            <person name="Pauley A."/>
            <person name="Peluso D."/>
            <person name="Rifkin L."/>
            <person name="Riles L."/>
            <person name="Taich A."/>
            <person name="Trevaskis E."/>
            <person name="Vignati D."/>
            <person name="Wilcox L."/>
            <person name="Wohldman P."/>
            <person name="Vaudin M."/>
            <person name="Wilson R."/>
            <person name="Waterston R."/>
            <person name="Albermann K."/>
            <person name="Hani J."/>
            <person name="Heumann K."/>
            <person name="Kleine K."/>
            <person name="Mewes H.-W."/>
            <person name="Zollner A."/>
            <person name="Zaccaria P."/>
        </authorList>
    </citation>
    <scope>NUCLEOTIDE SEQUENCE [LARGE SCALE GENOMIC DNA]</scope>
    <source>
        <strain>ATCC 204508 / S288c</strain>
    </source>
</reference>
<reference key="4">
    <citation type="journal article" date="2014" name="G3 (Bethesda)">
        <title>The reference genome sequence of Saccharomyces cerevisiae: Then and now.</title>
        <authorList>
            <person name="Engel S.R."/>
            <person name="Dietrich F.S."/>
            <person name="Fisk D.G."/>
            <person name="Binkley G."/>
            <person name="Balakrishnan R."/>
            <person name="Costanzo M.C."/>
            <person name="Dwight S.S."/>
            <person name="Hitz B.C."/>
            <person name="Karra K."/>
            <person name="Nash R.S."/>
            <person name="Weng S."/>
            <person name="Wong E.D."/>
            <person name="Lloyd P."/>
            <person name="Skrzypek M.S."/>
            <person name="Miyasato S.R."/>
            <person name="Simison M."/>
            <person name="Cherry J.M."/>
        </authorList>
    </citation>
    <scope>GENOME REANNOTATION</scope>
    <source>
        <strain>ATCC 204508 / S288c</strain>
    </source>
</reference>
<reference key="5">
    <citation type="journal article" date="2003" name="Mol. Cell">
        <title>Assigning function to yeast proteins by integration of technologies.</title>
        <authorList>
            <person name="Hazbun T.R."/>
            <person name="Malmstroem L."/>
            <person name="Anderson S."/>
            <person name="Graczyk B.J."/>
            <person name="Fox B."/>
            <person name="Riffle M."/>
            <person name="Sundin B.A."/>
            <person name="Aranda J.D."/>
            <person name="McDonald W.H."/>
            <person name="Chiu C.-H."/>
            <person name="Snydsman B.E."/>
            <person name="Bradley P."/>
            <person name="Muller E.G.D."/>
            <person name="Fields S."/>
            <person name="Baker D."/>
            <person name="Yates J.R. III"/>
            <person name="Davis T.N."/>
        </authorList>
    </citation>
    <scope>IDENTIFICATION BY MASS SPECTROMETRY</scope>
    <scope>INTERACTION WITH NSE3</scope>
</reference>
<reference key="6">
    <citation type="journal article" date="2003" name="Nature">
        <title>Global analysis of protein localization in budding yeast.</title>
        <authorList>
            <person name="Huh W.-K."/>
            <person name="Falvo J.V."/>
            <person name="Gerke L.C."/>
            <person name="Carroll A.S."/>
            <person name="Howson R.W."/>
            <person name="Weissman J.S."/>
            <person name="O'Shea E.K."/>
        </authorList>
    </citation>
    <scope>SUBCELLULAR LOCATION [LARGE SCALE ANALYSIS]</scope>
</reference>
<reference key="7">
    <citation type="journal article" date="2005" name="Mol. Microbiol.">
        <title>Qri2/Nse4, a component of the essential Smc5/6 DNA repair complex.</title>
        <authorList>
            <person name="Hu B."/>
            <person name="Liao C."/>
            <person name="Millson S.H."/>
            <person name="Mollapour M."/>
            <person name="Prodromou C."/>
            <person name="Pearl L.H."/>
            <person name="Piper P.W."/>
            <person name="Panaretou B."/>
        </authorList>
    </citation>
    <scope>FUNCTION</scope>
    <scope>INTERACTION WITH NSE3</scope>
    <scope>SUBCELLULAR LOCATION</scope>
</reference>
<reference key="8">
    <citation type="journal article" date="2005" name="Proc. Natl. Acad. Sci. U.S.A.">
        <title>A SUMO ligase is part of a nuclear multiprotein complex that affects DNA repair and chromosomal organization.</title>
        <authorList>
            <person name="Zhao X."/>
            <person name="Blobel G."/>
        </authorList>
    </citation>
    <scope>SUBUNIT</scope>
</reference>
<reference key="9">
    <citation type="journal article" date="2007" name="Proc. Natl. Acad. Sci. U.S.A.">
        <title>Analysis of phosphorylation sites on proteins from Saccharomyces cerevisiae by electron transfer dissociation (ETD) mass spectrometry.</title>
        <authorList>
            <person name="Chi A."/>
            <person name="Huttenhower C."/>
            <person name="Geer L.Y."/>
            <person name="Coon J.J."/>
            <person name="Syka J.E.P."/>
            <person name="Bai D.L."/>
            <person name="Shabanowitz J."/>
            <person name="Burke D.J."/>
            <person name="Troyanskaya O.G."/>
            <person name="Hunt D.F."/>
        </authorList>
    </citation>
    <scope>IDENTIFICATION BY MASS SPECTROMETRY [LARGE SCALE ANALYSIS]</scope>
</reference>
<reference key="10">
    <citation type="journal article" date="2008" name="Mol. Cell. Proteomics">
        <title>A multidimensional chromatography technology for in-depth phosphoproteome analysis.</title>
        <authorList>
            <person name="Albuquerque C.P."/>
            <person name="Smolka M.B."/>
            <person name="Payne S.H."/>
            <person name="Bafna V."/>
            <person name="Eng J."/>
            <person name="Zhou H."/>
        </authorList>
    </citation>
    <scope>IDENTIFICATION BY MASS SPECTROMETRY [LARGE SCALE ANALYSIS]</scope>
</reference>
<reference key="11">
    <citation type="journal article" date="2009" name="Science">
        <title>Global analysis of Cdk1 substrate phosphorylation sites provides insights into evolution.</title>
        <authorList>
            <person name="Holt L.J."/>
            <person name="Tuch B.B."/>
            <person name="Villen J."/>
            <person name="Johnson A.D."/>
            <person name="Gygi S.P."/>
            <person name="Morgan D.O."/>
        </authorList>
    </citation>
    <scope>IDENTIFICATION BY MASS SPECTROMETRY [LARGE SCALE ANALYSIS]</scope>
</reference>
<keyword id="KW-0002">3D-structure</keyword>
<keyword id="KW-0227">DNA damage</keyword>
<keyword id="KW-0233">DNA recombination</keyword>
<keyword id="KW-0234">DNA repair</keyword>
<keyword id="KW-0539">Nucleus</keyword>
<keyword id="KW-1185">Reference proteome</keyword>
<sequence>MSSTVISRKRRNSTVTEPDSSGETRKQKKSRSDEKSSSSKDGDPQLEFKVLQGYRDLESEMHKGRAQVTRTGDIGVAMDNLNAVDSLFNKVIGIKNNGLFAHDARAMVSISELAQISVRNLKFDDSRSMVNLENIVNSLKRYMLKEHFKLNNIAENRNDLTLAADEQSAADQQEESDGDIDRTPDDNHTDKATSSFKATSMRHSYLQQFSHYNEFSQFNWFRIGALYNTISKNAPITDHLMGPLSIEKKPRVLTQRRRNNDQVGEKITAEKITQHSLNSTQQETTPEQVKKCFKKLSKKLGPEGSINLFKFIIDPNSFSRSIENLFYTSFLIKEGKLLMEHDEEGLPTIKIKQSISHTDSRSKEIERQRRRAAHQNHIIFQMDMPTWRKLIKKYNITSPFLD</sequence>
<protein>
    <recommendedName>
        <fullName>Non-structural maintenance of chromosome element 4</fullName>
        <shortName>Non-SMC element 4</shortName>
    </recommendedName>
    <alternativeName>
        <fullName>Protein QRI2</fullName>
    </alternativeName>
</protein>
<accession>P43124</accession>
<accession>D6VRP5</accession>